<sequence length="289" mass="30899">MKLSFTKMHGAGNDFVVLDGYTRALPPLTGAQVRALADRHFGIGADQLLLVEKPTVDGADFKYRIFNCDGGEVEHCGNGARCFVKFVRDHGLTGKASVRVEVKHGVITLTMQDNGEVVVDMGAPVFEPARVPFDASGLDGRREGADTLWPLPVNGVTRWISVVSMGNPHAVQIVDDAEAFAVRVDGPAIERDPRFPQRVNAGFMQIVSRHEVNLRVYERGAGETLACGTGACAAVAAGIRRGRLDSPVTVHTHGGTLTISWNGACDERAPLMMAGPATTVFEGVIELPA</sequence>
<evidence type="ECO:0000255" key="1">
    <source>
        <dbReference type="HAMAP-Rule" id="MF_00197"/>
    </source>
</evidence>
<gene>
    <name evidence="1" type="primary">dapF</name>
    <name type="ordered locus">BMA10247_3426</name>
</gene>
<reference key="1">
    <citation type="journal article" date="2010" name="Genome Biol. Evol.">
        <title>Continuing evolution of Burkholderia mallei through genome reduction and large-scale rearrangements.</title>
        <authorList>
            <person name="Losada L."/>
            <person name="Ronning C.M."/>
            <person name="DeShazer D."/>
            <person name="Woods D."/>
            <person name="Fedorova N."/>
            <person name="Kim H.S."/>
            <person name="Shabalina S.A."/>
            <person name="Pearson T.R."/>
            <person name="Brinkac L."/>
            <person name="Tan P."/>
            <person name="Nandi T."/>
            <person name="Crabtree J."/>
            <person name="Badger J."/>
            <person name="Beckstrom-Sternberg S."/>
            <person name="Saqib M."/>
            <person name="Schutzer S.E."/>
            <person name="Keim P."/>
            <person name="Nierman W.C."/>
        </authorList>
    </citation>
    <scope>NUCLEOTIDE SEQUENCE [LARGE SCALE GENOMIC DNA]</scope>
    <source>
        <strain>NCTC 10247</strain>
    </source>
</reference>
<accession>A3MRQ6</accession>
<dbReference type="EC" id="5.1.1.7" evidence="1"/>
<dbReference type="EMBL" id="CP000548">
    <property type="protein sequence ID" value="ABO06804.1"/>
    <property type="molecule type" value="Genomic_DNA"/>
</dbReference>
<dbReference type="RefSeq" id="WP_004199067.1">
    <property type="nucleotide sequence ID" value="NZ_CP007802.1"/>
</dbReference>
<dbReference type="SMR" id="A3MRQ6"/>
<dbReference type="GeneID" id="93058719"/>
<dbReference type="KEGG" id="bmaz:BM44_3092"/>
<dbReference type="KEGG" id="bmn:BMA10247_3426"/>
<dbReference type="PATRIC" id="fig|320389.8.peg.3462"/>
<dbReference type="UniPathway" id="UPA00034">
    <property type="reaction ID" value="UER00025"/>
</dbReference>
<dbReference type="GO" id="GO:0005829">
    <property type="term" value="C:cytosol"/>
    <property type="evidence" value="ECO:0007669"/>
    <property type="project" value="TreeGrafter"/>
</dbReference>
<dbReference type="GO" id="GO:0008837">
    <property type="term" value="F:diaminopimelate epimerase activity"/>
    <property type="evidence" value="ECO:0007669"/>
    <property type="project" value="UniProtKB-UniRule"/>
</dbReference>
<dbReference type="GO" id="GO:0009089">
    <property type="term" value="P:lysine biosynthetic process via diaminopimelate"/>
    <property type="evidence" value="ECO:0007669"/>
    <property type="project" value="UniProtKB-UniRule"/>
</dbReference>
<dbReference type="FunFam" id="3.10.310.10:FF:000001">
    <property type="entry name" value="Diaminopimelate epimerase"/>
    <property type="match status" value="1"/>
</dbReference>
<dbReference type="Gene3D" id="3.10.310.10">
    <property type="entry name" value="Diaminopimelate Epimerase, Chain A, domain 1"/>
    <property type="match status" value="2"/>
</dbReference>
<dbReference type="HAMAP" id="MF_00197">
    <property type="entry name" value="DAP_epimerase"/>
    <property type="match status" value="1"/>
</dbReference>
<dbReference type="InterPro" id="IPR018510">
    <property type="entry name" value="DAP_epimerase_AS"/>
</dbReference>
<dbReference type="InterPro" id="IPR001653">
    <property type="entry name" value="DAP_epimerase_DapF"/>
</dbReference>
<dbReference type="NCBIfam" id="TIGR00652">
    <property type="entry name" value="DapF"/>
    <property type="match status" value="1"/>
</dbReference>
<dbReference type="PANTHER" id="PTHR31689:SF0">
    <property type="entry name" value="DIAMINOPIMELATE EPIMERASE"/>
    <property type="match status" value="1"/>
</dbReference>
<dbReference type="PANTHER" id="PTHR31689">
    <property type="entry name" value="DIAMINOPIMELATE EPIMERASE, CHLOROPLASTIC"/>
    <property type="match status" value="1"/>
</dbReference>
<dbReference type="Pfam" id="PF01678">
    <property type="entry name" value="DAP_epimerase"/>
    <property type="match status" value="2"/>
</dbReference>
<dbReference type="SUPFAM" id="SSF54506">
    <property type="entry name" value="Diaminopimelate epimerase-like"/>
    <property type="match status" value="1"/>
</dbReference>
<dbReference type="PROSITE" id="PS01326">
    <property type="entry name" value="DAP_EPIMERASE"/>
    <property type="match status" value="1"/>
</dbReference>
<proteinExistence type="inferred from homology"/>
<name>DAPF_BURM7</name>
<keyword id="KW-0028">Amino-acid biosynthesis</keyword>
<keyword id="KW-0963">Cytoplasm</keyword>
<keyword id="KW-0413">Isomerase</keyword>
<keyword id="KW-0457">Lysine biosynthesis</keyword>
<organism>
    <name type="scientific">Burkholderia mallei (strain NCTC 10247)</name>
    <dbReference type="NCBI Taxonomy" id="320389"/>
    <lineage>
        <taxon>Bacteria</taxon>
        <taxon>Pseudomonadati</taxon>
        <taxon>Pseudomonadota</taxon>
        <taxon>Betaproteobacteria</taxon>
        <taxon>Burkholderiales</taxon>
        <taxon>Burkholderiaceae</taxon>
        <taxon>Burkholderia</taxon>
        <taxon>pseudomallei group</taxon>
    </lineage>
</organism>
<feature type="chain" id="PRO_1000011854" description="Diaminopimelate epimerase">
    <location>
        <begin position="1"/>
        <end position="289"/>
    </location>
</feature>
<feature type="active site" description="Proton donor" evidence="1">
    <location>
        <position position="76"/>
    </location>
</feature>
<feature type="active site" description="Proton acceptor" evidence="1">
    <location>
        <position position="227"/>
    </location>
</feature>
<feature type="binding site" evidence="1">
    <location>
        <position position="13"/>
    </location>
    <ligand>
        <name>substrate</name>
    </ligand>
</feature>
<feature type="binding site" evidence="1">
    <location>
        <position position="47"/>
    </location>
    <ligand>
        <name>substrate</name>
    </ligand>
</feature>
<feature type="binding site" evidence="1">
    <location>
        <position position="67"/>
    </location>
    <ligand>
        <name>substrate</name>
    </ligand>
</feature>
<feature type="binding site" evidence="1">
    <location>
        <begin position="77"/>
        <end position="78"/>
    </location>
    <ligand>
        <name>substrate</name>
    </ligand>
</feature>
<feature type="binding site" evidence="1">
    <location>
        <position position="167"/>
    </location>
    <ligand>
        <name>substrate</name>
    </ligand>
</feature>
<feature type="binding site" evidence="1">
    <location>
        <position position="200"/>
    </location>
    <ligand>
        <name>substrate</name>
    </ligand>
</feature>
<feature type="binding site" evidence="1">
    <location>
        <begin position="218"/>
        <end position="219"/>
    </location>
    <ligand>
        <name>substrate</name>
    </ligand>
</feature>
<feature type="binding site" evidence="1">
    <location>
        <begin position="228"/>
        <end position="229"/>
    </location>
    <ligand>
        <name>substrate</name>
    </ligand>
</feature>
<feature type="site" description="Could be important to modulate the pK values of the two catalytic cysteine residues" evidence="1">
    <location>
        <position position="169"/>
    </location>
</feature>
<feature type="site" description="Could be important to modulate the pK values of the two catalytic cysteine residues" evidence="1">
    <location>
        <position position="218"/>
    </location>
</feature>
<protein>
    <recommendedName>
        <fullName evidence="1">Diaminopimelate epimerase</fullName>
        <shortName evidence="1">DAP epimerase</shortName>
        <ecNumber evidence="1">5.1.1.7</ecNumber>
    </recommendedName>
    <alternativeName>
        <fullName evidence="1">PLP-independent amino acid racemase</fullName>
    </alternativeName>
</protein>
<comment type="function">
    <text evidence="1">Catalyzes the stereoinversion of LL-2,6-diaminopimelate (L,L-DAP) to meso-diaminopimelate (meso-DAP), a precursor of L-lysine and an essential component of the bacterial peptidoglycan.</text>
</comment>
<comment type="catalytic activity">
    <reaction evidence="1">
        <text>(2S,6S)-2,6-diaminopimelate = meso-2,6-diaminopimelate</text>
        <dbReference type="Rhea" id="RHEA:15393"/>
        <dbReference type="ChEBI" id="CHEBI:57609"/>
        <dbReference type="ChEBI" id="CHEBI:57791"/>
        <dbReference type="EC" id="5.1.1.7"/>
    </reaction>
</comment>
<comment type="pathway">
    <text evidence="1">Amino-acid biosynthesis; L-lysine biosynthesis via DAP pathway; DL-2,6-diaminopimelate from LL-2,6-diaminopimelate: step 1/1.</text>
</comment>
<comment type="subunit">
    <text evidence="1">Homodimer.</text>
</comment>
<comment type="subcellular location">
    <subcellularLocation>
        <location evidence="1">Cytoplasm</location>
    </subcellularLocation>
</comment>
<comment type="similarity">
    <text evidence="1">Belongs to the diaminopimelate epimerase family.</text>
</comment>